<feature type="chain" id="PRO_0000252702" description="Phosphoribosylformylglycinamidine synthase subunit PurQ">
    <location>
        <begin position="1"/>
        <end position="234"/>
    </location>
</feature>
<feature type="domain" description="Glutamine amidotransferase type-1" evidence="1">
    <location>
        <begin position="6"/>
        <end position="234"/>
    </location>
</feature>
<feature type="active site" description="Nucleophile" evidence="1">
    <location>
        <position position="89"/>
    </location>
</feature>
<feature type="active site" evidence="1">
    <location>
        <position position="206"/>
    </location>
</feature>
<feature type="active site" evidence="1">
    <location>
        <position position="208"/>
    </location>
</feature>
<keyword id="KW-0067">ATP-binding</keyword>
<keyword id="KW-0963">Cytoplasm</keyword>
<keyword id="KW-0315">Glutamine amidotransferase</keyword>
<keyword id="KW-0378">Hydrolase</keyword>
<keyword id="KW-0436">Ligase</keyword>
<keyword id="KW-0547">Nucleotide-binding</keyword>
<keyword id="KW-0658">Purine biosynthesis</keyword>
<proteinExistence type="inferred from homology"/>
<accession>Q3AS25</accession>
<comment type="function">
    <text evidence="1">Part of the phosphoribosylformylglycinamidine synthase complex involved in the purines biosynthetic pathway. Catalyzes the ATP-dependent conversion of formylglycinamide ribonucleotide (FGAR) and glutamine to yield formylglycinamidine ribonucleotide (FGAM) and glutamate. The FGAM synthase complex is composed of three subunits. PurQ produces an ammonia molecule by converting glutamine to glutamate. PurL transfers the ammonia molecule to FGAR to form FGAM in an ATP-dependent manner. PurS interacts with PurQ and PurL and is thought to assist in the transfer of the ammonia molecule from PurQ to PurL.</text>
</comment>
<comment type="catalytic activity">
    <reaction evidence="1">
        <text>N(2)-formyl-N(1)-(5-phospho-beta-D-ribosyl)glycinamide + L-glutamine + ATP + H2O = 2-formamido-N(1)-(5-O-phospho-beta-D-ribosyl)acetamidine + L-glutamate + ADP + phosphate + H(+)</text>
        <dbReference type="Rhea" id="RHEA:17129"/>
        <dbReference type="ChEBI" id="CHEBI:15377"/>
        <dbReference type="ChEBI" id="CHEBI:15378"/>
        <dbReference type="ChEBI" id="CHEBI:29985"/>
        <dbReference type="ChEBI" id="CHEBI:30616"/>
        <dbReference type="ChEBI" id="CHEBI:43474"/>
        <dbReference type="ChEBI" id="CHEBI:58359"/>
        <dbReference type="ChEBI" id="CHEBI:147286"/>
        <dbReference type="ChEBI" id="CHEBI:147287"/>
        <dbReference type="ChEBI" id="CHEBI:456216"/>
        <dbReference type="EC" id="6.3.5.3"/>
    </reaction>
</comment>
<comment type="catalytic activity">
    <reaction evidence="1">
        <text>L-glutamine + H2O = L-glutamate + NH4(+)</text>
        <dbReference type="Rhea" id="RHEA:15889"/>
        <dbReference type="ChEBI" id="CHEBI:15377"/>
        <dbReference type="ChEBI" id="CHEBI:28938"/>
        <dbReference type="ChEBI" id="CHEBI:29985"/>
        <dbReference type="ChEBI" id="CHEBI:58359"/>
        <dbReference type="EC" id="3.5.1.2"/>
    </reaction>
</comment>
<comment type="pathway">
    <text evidence="1">Purine metabolism; IMP biosynthesis via de novo pathway; 5-amino-1-(5-phospho-D-ribosyl)imidazole from N(2)-formyl-N(1)-(5-phospho-D-ribosyl)glycinamide: step 1/2.</text>
</comment>
<comment type="subunit">
    <text evidence="1">Part of the FGAM synthase complex composed of 1 PurL, 1 PurQ and 2 PurS subunits.</text>
</comment>
<comment type="subcellular location">
    <subcellularLocation>
        <location evidence="1">Cytoplasm</location>
    </subcellularLocation>
</comment>
<protein>
    <recommendedName>
        <fullName evidence="1">Phosphoribosylformylglycinamidine synthase subunit PurQ</fullName>
        <shortName evidence="1">FGAM synthase</shortName>
        <ecNumber evidence="1">6.3.5.3</ecNumber>
    </recommendedName>
    <alternativeName>
        <fullName evidence="1">Formylglycinamide ribonucleotide amidotransferase subunit I</fullName>
        <shortName evidence="1">FGAR amidotransferase I</shortName>
        <shortName evidence="1">FGAR-AT I</shortName>
    </alternativeName>
    <alternativeName>
        <fullName evidence="1">Glutaminase PurQ</fullName>
        <ecNumber evidence="1">3.5.1.2</ecNumber>
    </alternativeName>
    <alternativeName>
        <fullName evidence="1">Phosphoribosylformylglycinamidine synthase subunit I</fullName>
    </alternativeName>
</protein>
<dbReference type="EC" id="6.3.5.3" evidence="1"/>
<dbReference type="EC" id="3.5.1.2" evidence="1"/>
<dbReference type="EMBL" id="CP000108">
    <property type="protein sequence ID" value="ABB28200.1"/>
    <property type="molecule type" value="Genomic_DNA"/>
</dbReference>
<dbReference type="SMR" id="Q3AS25"/>
<dbReference type="STRING" id="340177.Cag_0937"/>
<dbReference type="KEGG" id="cch:Cag_0937"/>
<dbReference type="eggNOG" id="COG0047">
    <property type="taxonomic scope" value="Bacteria"/>
</dbReference>
<dbReference type="HOGENOM" id="CLU_001031_3_1_10"/>
<dbReference type="OrthoDB" id="9804441at2"/>
<dbReference type="UniPathway" id="UPA00074">
    <property type="reaction ID" value="UER00128"/>
</dbReference>
<dbReference type="GO" id="GO:0005737">
    <property type="term" value="C:cytoplasm"/>
    <property type="evidence" value="ECO:0007669"/>
    <property type="project" value="UniProtKB-SubCell"/>
</dbReference>
<dbReference type="GO" id="GO:0005524">
    <property type="term" value="F:ATP binding"/>
    <property type="evidence" value="ECO:0007669"/>
    <property type="project" value="UniProtKB-KW"/>
</dbReference>
<dbReference type="GO" id="GO:0004359">
    <property type="term" value="F:glutaminase activity"/>
    <property type="evidence" value="ECO:0007669"/>
    <property type="project" value="UniProtKB-EC"/>
</dbReference>
<dbReference type="GO" id="GO:0004642">
    <property type="term" value="F:phosphoribosylformylglycinamidine synthase activity"/>
    <property type="evidence" value="ECO:0007669"/>
    <property type="project" value="UniProtKB-UniRule"/>
</dbReference>
<dbReference type="GO" id="GO:0006189">
    <property type="term" value="P:'de novo' IMP biosynthetic process"/>
    <property type="evidence" value="ECO:0007669"/>
    <property type="project" value="UniProtKB-UniRule"/>
</dbReference>
<dbReference type="CDD" id="cd01740">
    <property type="entry name" value="GATase1_FGAR_AT"/>
    <property type="match status" value="1"/>
</dbReference>
<dbReference type="Gene3D" id="3.40.50.880">
    <property type="match status" value="1"/>
</dbReference>
<dbReference type="HAMAP" id="MF_00421">
    <property type="entry name" value="PurQ"/>
    <property type="match status" value="1"/>
</dbReference>
<dbReference type="InterPro" id="IPR029062">
    <property type="entry name" value="Class_I_gatase-like"/>
</dbReference>
<dbReference type="InterPro" id="IPR010075">
    <property type="entry name" value="PRibForGlyAmidine_synth_PurQ"/>
</dbReference>
<dbReference type="NCBIfam" id="TIGR01737">
    <property type="entry name" value="FGAM_synth_I"/>
    <property type="match status" value="1"/>
</dbReference>
<dbReference type="NCBIfam" id="NF002957">
    <property type="entry name" value="PRK03619.1"/>
    <property type="match status" value="1"/>
</dbReference>
<dbReference type="PANTHER" id="PTHR47552">
    <property type="entry name" value="PHOSPHORIBOSYLFORMYLGLYCINAMIDINE SYNTHASE SUBUNIT PURQ"/>
    <property type="match status" value="1"/>
</dbReference>
<dbReference type="PANTHER" id="PTHR47552:SF1">
    <property type="entry name" value="PHOSPHORIBOSYLFORMYLGLYCINAMIDINE SYNTHASE SUBUNIT PURQ"/>
    <property type="match status" value="1"/>
</dbReference>
<dbReference type="Pfam" id="PF13507">
    <property type="entry name" value="GATase_5"/>
    <property type="match status" value="1"/>
</dbReference>
<dbReference type="PIRSF" id="PIRSF001586">
    <property type="entry name" value="FGAM_synth_I"/>
    <property type="match status" value="1"/>
</dbReference>
<dbReference type="SMART" id="SM01211">
    <property type="entry name" value="GATase_5"/>
    <property type="match status" value="1"/>
</dbReference>
<dbReference type="SUPFAM" id="SSF52317">
    <property type="entry name" value="Class I glutamine amidotransferase-like"/>
    <property type="match status" value="1"/>
</dbReference>
<dbReference type="PROSITE" id="PS51273">
    <property type="entry name" value="GATASE_TYPE_1"/>
    <property type="match status" value="1"/>
</dbReference>
<evidence type="ECO:0000255" key="1">
    <source>
        <dbReference type="HAMAP-Rule" id="MF_00421"/>
    </source>
</evidence>
<gene>
    <name evidence="1" type="primary">purQ</name>
    <name type="ordered locus">Cag_0937</name>
</gene>
<organism>
    <name type="scientific">Chlorobium chlorochromatii (strain CaD3)</name>
    <dbReference type="NCBI Taxonomy" id="340177"/>
    <lineage>
        <taxon>Bacteria</taxon>
        <taxon>Pseudomonadati</taxon>
        <taxon>Chlorobiota</taxon>
        <taxon>Chlorobiia</taxon>
        <taxon>Chlorobiales</taxon>
        <taxon>Chlorobiaceae</taxon>
        <taxon>Chlorobium/Pelodictyon group</taxon>
        <taxon>Chlorobium</taxon>
    </lineage>
</organism>
<sequence>MSAITVGVVVFPGSNCDHDTAYALASFAGVKPVMLWHNNHDLQGAQAIVLPGGFSYGDYLRAGAIARFSPLMKEVVEFARKGYPVLGICNGFQVLLESGLLEGALSRNRDKKFLCCQTTITPVNCSTRFTEDYHQGEVLRIPIAHGEGNYFAPPEVLESLQEHNQIAFQYCNAQGEVTVEANPNGSLLNIAGIVNRAGNVLGLMPHPERASDAALGSVDGRLLFESLFRSLTGV</sequence>
<name>PURQ_CHLCH</name>
<reference key="1">
    <citation type="submission" date="2005-08" db="EMBL/GenBank/DDBJ databases">
        <title>Complete sequence of Chlorobium chlorochromatii CaD3.</title>
        <authorList>
            <consortium name="US DOE Joint Genome Institute"/>
            <person name="Copeland A."/>
            <person name="Lucas S."/>
            <person name="Lapidus A."/>
            <person name="Barry K."/>
            <person name="Detter J.C."/>
            <person name="Glavina T."/>
            <person name="Hammon N."/>
            <person name="Israni S."/>
            <person name="Pitluck S."/>
            <person name="Bryant D."/>
            <person name="Schmutz J."/>
            <person name="Larimer F."/>
            <person name="Land M."/>
            <person name="Kyrpides N."/>
            <person name="Ivanova N."/>
            <person name="Richardson P."/>
        </authorList>
    </citation>
    <scope>NUCLEOTIDE SEQUENCE [LARGE SCALE GENOMIC DNA]</scope>
    <source>
        <strain>CaD3</strain>
    </source>
</reference>